<comment type="function">
    <text evidence="1">Binds RpoD and negatively regulates RpoD-mediated transcription activation by preventing the interaction between the primary sigma factor RpoD with the catalytic core of the RNA polymerase and with promoter DNA. May be involved in replacement of the RNA polymerase sigma subunit from RpoD to RpoS during the transition from exponential growth to the stationary phase.</text>
</comment>
<comment type="subunit">
    <text evidence="1">Interacts with RpoD.</text>
</comment>
<comment type="subcellular location">
    <subcellularLocation>
        <location evidence="1">Cytoplasm</location>
    </subcellularLocation>
</comment>
<comment type="similarity">
    <text evidence="1">Belongs to the Rsd/AlgQ family.</text>
</comment>
<accession>B7LA89</accession>
<gene>
    <name evidence="1" type="primary">rsd</name>
    <name type="ordered locus">EC55989_4480</name>
</gene>
<name>RSD_ECO55</name>
<dbReference type="EMBL" id="CU928145">
    <property type="protein sequence ID" value="CAV01244.1"/>
    <property type="molecule type" value="Genomic_DNA"/>
</dbReference>
<dbReference type="RefSeq" id="WP_000934302.1">
    <property type="nucleotide sequence ID" value="NC_011748.1"/>
</dbReference>
<dbReference type="SMR" id="B7LA89"/>
<dbReference type="GeneID" id="75205513"/>
<dbReference type="KEGG" id="eck:EC55989_4480"/>
<dbReference type="HOGENOM" id="CLU_142729_0_0_6"/>
<dbReference type="Proteomes" id="UP000000746">
    <property type="component" value="Chromosome"/>
</dbReference>
<dbReference type="GO" id="GO:0005737">
    <property type="term" value="C:cytoplasm"/>
    <property type="evidence" value="ECO:0007669"/>
    <property type="project" value="UniProtKB-SubCell"/>
</dbReference>
<dbReference type="GO" id="GO:0006355">
    <property type="term" value="P:regulation of DNA-templated transcription"/>
    <property type="evidence" value="ECO:0007669"/>
    <property type="project" value="InterPro"/>
</dbReference>
<dbReference type="FunFam" id="1.20.120.1370:FF:000001">
    <property type="entry name" value="Regulator of sigma D"/>
    <property type="match status" value="1"/>
</dbReference>
<dbReference type="Gene3D" id="1.20.120.1370">
    <property type="entry name" value="Regulator of RNA polymerase sigma(70) subunit, domain 4"/>
    <property type="match status" value="1"/>
</dbReference>
<dbReference type="HAMAP" id="MF_01181">
    <property type="entry name" value="Rsd"/>
    <property type="match status" value="1"/>
</dbReference>
<dbReference type="InterPro" id="IPR038309">
    <property type="entry name" value="Rsd/AlgQ_sf"/>
</dbReference>
<dbReference type="InterPro" id="IPR023785">
    <property type="entry name" value="Sigma70_reg_Rsd"/>
</dbReference>
<dbReference type="InterPro" id="IPR007448">
    <property type="entry name" value="Sigma70_reg_Rsd_AlgQ"/>
</dbReference>
<dbReference type="NCBIfam" id="NF008723">
    <property type="entry name" value="PRK11718.1"/>
    <property type="match status" value="1"/>
</dbReference>
<dbReference type="Pfam" id="PF04353">
    <property type="entry name" value="Rsd_AlgQ"/>
    <property type="match status" value="1"/>
</dbReference>
<dbReference type="PIRSF" id="PIRSF016548">
    <property type="entry name" value="Rsd_AlgQ"/>
    <property type="match status" value="1"/>
</dbReference>
<feature type="chain" id="PRO_1000164436" description="Regulator of sigma D">
    <location>
        <begin position="1"/>
        <end position="158"/>
    </location>
</feature>
<keyword id="KW-0963">Cytoplasm</keyword>
<keyword id="KW-1185">Reference proteome</keyword>
<keyword id="KW-0804">Transcription</keyword>
<keyword id="KW-0805">Transcription regulation</keyword>
<reference key="1">
    <citation type="journal article" date="2009" name="PLoS Genet.">
        <title>Organised genome dynamics in the Escherichia coli species results in highly diverse adaptive paths.</title>
        <authorList>
            <person name="Touchon M."/>
            <person name="Hoede C."/>
            <person name="Tenaillon O."/>
            <person name="Barbe V."/>
            <person name="Baeriswyl S."/>
            <person name="Bidet P."/>
            <person name="Bingen E."/>
            <person name="Bonacorsi S."/>
            <person name="Bouchier C."/>
            <person name="Bouvet O."/>
            <person name="Calteau A."/>
            <person name="Chiapello H."/>
            <person name="Clermont O."/>
            <person name="Cruveiller S."/>
            <person name="Danchin A."/>
            <person name="Diard M."/>
            <person name="Dossat C."/>
            <person name="Karoui M.E."/>
            <person name="Frapy E."/>
            <person name="Garry L."/>
            <person name="Ghigo J.M."/>
            <person name="Gilles A.M."/>
            <person name="Johnson J."/>
            <person name="Le Bouguenec C."/>
            <person name="Lescat M."/>
            <person name="Mangenot S."/>
            <person name="Martinez-Jehanne V."/>
            <person name="Matic I."/>
            <person name="Nassif X."/>
            <person name="Oztas S."/>
            <person name="Petit M.A."/>
            <person name="Pichon C."/>
            <person name="Rouy Z."/>
            <person name="Ruf C.S."/>
            <person name="Schneider D."/>
            <person name="Tourret J."/>
            <person name="Vacherie B."/>
            <person name="Vallenet D."/>
            <person name="Medigue C."/>
            <person name="Rocha E.P.C."/>
            <person name="Denamur E."/>
        </authorList>
    </citation>
    <scope>NUCLEOTIDE SEQUENCE [LARGE SCALE GENOMIC DNA]</scope>
    <source>
        <strain>55989 / EAEC</strain>
    </source>
</reference>
<proteinExistence type="inferred from homology"/>
<sequence>MLNQLDNLTERVRGSNKLVDRWLHVRKHLLVAYYNLVGIKPGKESYMRLNEKALDDFCQSLVDYLSAGHFSIYERILHKLEGNGQLARAAKIWPQLEANTQQIMDYYDSSLETAIDHDNYLEFQQVLSDIGEALEARFVLEDKLILLVLDAARVKHPA</sequence>
<evidence type="ECO:0000255" key="1">
    <source>
        <dbReference type="HAMAP-Rule" id="MF_01181"/>
    </source>
</evidence>
<organism>
    <name type="scientific">Escherichia coli (strain 55989 / EAEC)</name>
    <dbReference type="NCBI Taxonomy" id="585055"/>
    <lineage>
        <taxon>Bacteria</taxon>
        <taxon>Pseudomonadati</taxon>
        <taxon>Pseudomonadota</taxon>
        <taxon>Gammaproteobacteria</taxon>
        <taxon>Enterobacterales</taxon>
        <taxon>Enterobacteriaceae</taxon>
        <taxon>Escherichia</taxon>
    </lineage>
</organism>
<protein>
    <recommendedName>
        <fullName evidence="1">Regulator of sigma D</fullName>
    </recommendedName>
</protein>